<organism>
    <name type="scientific">Shewanella baltica (strain OS195)</name>
    <dbReference type="NCBI Taxonomy" id="399599"/>
    <lineage>
        <taxon>Bacteria</taxon>
        <taxon>Pseudomonadati</taxon>
        <taxon>Pseudomonadota</taxon>
        <taxon>Gammaproteobacteria</taxon>
        <taxon>Alteromonadales</taxon>
        <taxon>Shewanellaceae</taxon>
        <taxon>Shewanella</taxon>
    </lineage>
</organism>
<name>HTPX_SHEB9</name>
<protein>
    <recommendedName>
        <fullName evidence="1">Protease HtpX</fullName>
        <ecNumber evidence="1">3.4.24.-</ecNumber>
    </recommendedName>
    <alternativeName>
        <fullName evidence="1">Heat shock protein HtpX</fullName>
    </alternativeName>
</protein>
<proteinExistence type="inferred from homology"/>
<accession>A9L578</accession>
<reference key="1">
    <citation type="submission" date="2007-11" db="EMBL/GenBank/DDBJ databases">
        <title>Complete sequence of chromosome of Shewanella baltica OS195.</title>
        <authorList>
            <consortium name="US DOE Joint Genome Institute"/>
            <person name="Copeland A."/>
            <person name="Lucas S."/>
            <person name="Lapidus A."/>
            <person name="Barry K."/>
            <person name="Glavina del Rio T."/>
            <person name="Dalin E."/>
            <person name="Tice H."/>
            <person name="Pitluck S."/>
            <person name="Chain P."/>
            <person name="Malfatti S."/>
            <person name="Shin M."/>
            <person name="Vergez L."/>
            <person name="Schmutz J."/>
            <person name="Larimer F."/>
            <person name="Land M."/>
            <person name="Hauser L."/>
            <person name="Kyrpides N."/>
            <person name="Kim E."/>
            <person name="Brettar I."/>
            <person name="Rodrigues J."/>
            <person name="Konstantinidis K."/>
            <person name="Klappenbach J."/>
            <person name="Hofle M."/>
            <person name="Tiedje J."/>
            <person name="Richardson P."/>
        </authorList>
    </citation>
    <scope>NUCLEOTIDE SEQUENCE [LARGE SCALE GENOMIC DNA]</scope>
    <source>
        <strain>OS195</strain>
    </source>
</reference>
<evidence type="ECO:0000255" key="1">
    <source>
        <dbReference type="HAMAP-Rule" id="MF_00188"/>
    </source>
</evidence>
<feature type="chain" id="PRO_1000077479" description="Protease HtpX">
    <location>
        <begin position="1"/>
        <end position="287"/>
    </location>
</feature>
<feature type="transmembrane region" description="Helical" evidence="1">
    <location>
        <begin position="4"/>
        <end position="24"/>
    </location>
</feature>
<feature type="transmembrane region" description="Helical" evidence="1">
    <location>
        <begin position="33"/>
        <end position="53"/>
    </location>
</feature>
<feature type="transmembrane region" description="Helical" evidence="1">
    <location>
        <begin position="154"/>
        <end position="174"/>
    </location>
</feature>
<feature type="transmembrane region" description="Helical" evidence="1">
    <location>
        <begin position="195"/>
        <end position="215"/>
    </location>
</feature>
<feature type="active site" evidence="1">
    <location>
        <position position="140"/>
    </location>
</feature>
<feature type="binding site" evidence="1">
    <location>
        <position position="139"/>
    </location>
    <ligand>
        <name>Zn(2+)</name>
        <dbReference type="ChEBI" id="CHEBI:29105"/>
        <note>catalytic</note>
    </ligand>
</feature>
<feature type="binding site" evidence="1">
    <location>
        <position position="143"/>
    </location>
    <ligand>
        <name>Zn(2+)</name>
        <dbReference type="ChEBI" id="CHEBI:29105"/>
        <note>catalytic</note>
    </ligand>
</feature>
<feature type="binding site" evidence="1">
    <location>
        <position position="220"/>
    </location>
    <ligand>
        <name>Zn(2+)</name>
        <dbReference type="ChEBI" id="CHEBI:29105"/>
        <note>catalytic</note>
    </ligand>
</feature>
<keyword id="KW-0997">Cell inner membrane</keyword>
<keyword id="KW-1003">Cell membrane</keyword>
<keyword id="KW-0378">Hydrolase</keyword>
<keyword id="KW-0472">Membrane</keyword>
<keyword id="KW-0479">Metal-binding</keyword>
<keyword id="KW-0482">Metalloprotease</keyword>
<keyword id="KW-0645">Protease</keyword>
<keyword id="KW-0812">Transmembrane</keyword>
<keyword id="KW-1133">Transmembrane helix</keyword>
<keyword id="KW-0862">Zinc</keyword>
<gene>
    <name evidence="1" type="primary">htpX</name>
    <name type="ordered locus">Sbal195_2672</name>
</gene>
<sequence>MKRIFLLIATNLAVLLVASIVMSILGVNTSTMGGLLVFAAIFGFGGAFISLAISKWMAKKTMGCEVITTPRDSTERWLVETVARQAKQAGIKMPEVAIYQSPDMNAFATGPSKDNSLVAVSTGLLYGMSQDEIEGVLAHEVSHVANGDMVTLTLIQGVVNTFVIFAARVVAGIINNFVSSNDEEGEGLGMFAYMAVVFVLDMLFGILASIIVAYFSRIREYKADEGAARLAGKGKMIAALERLRQGPESTAMPAQMSAFGINGKRSMAEMMMSHPPLEKRIAALRAS</sequence>
<comment type="cofactor">
    <cofactor evidence="1">
        <name>Zn(2+)</name>
        <dbReference type="ChEBI" id="CHEBI:29105"/>
    </cofactor>
    <text evidence="1">Binds 1 zinc ion per subunit.</text>
</comment>
<comment type="subcellular location">
    <subcellularLocation>
        <location evidence="1">Cell inner membrane</location>
        <topology evidence="1">Multi-pass membrane protein</topology>
    </subcellularLocation>
</comment>
<comment type="similarity">
    <text evidence="1">Belongs to the peptidase M48B family.</text>
</comment>
<dbReference type="EC" id="3.4.24.-" evidence="1"/>
<dbReference type="EMBL" id="CP000891">
    <property type="protein sequence ID" value="ABX49840.1"/>
    <property type="molecule type" value="Genomic_DNA"/>
</dbReference>
<dbReference type="RefSeq" id="WP_006082065.1">
    <property type="nucleotide sequence ID" value="NC_009997.1"/>
</dbReference>
<dbReference type="MEROPS" id="M48.002"/>
<dbReference type="GeneID" id="11772760"/>
<dbReference type="KEGG" id="sbn:Sbal195_2672"/>
<dbReference type="HOGENOM" id="CLU_042266_1_0_6"/>
<dbReference type="Proteomes" id="UP000000770">
    <property type="component" value="Chromosome"/>
</dbReference>
<dbReference type="GO" id="GO:0005886">
    <property type="term" value="C:plasma membrane"/>
    <property type="evidence" value="ECO:0007669"/>
    <property type="project" value="UniProtKB-SubCell"/>
</dbReference>
<dbReference type="GO" id="GO:0004222">
    <property type="term" value="F:metalloendopeptidase activity"/>
    <property type="evidence" value="ECO:0007669"/>
    <property type="project" value="UniProtKB-UniRule"/>
</dbReference>
<dbReference type="GO" id="GO:0008270">
    <property type="term" value="F:zinc ion binding"/>
    <property type="evidence" value="ECO:0007669"/>
    <property type="project" value="UniProtKB-UniRule"/>
</dbReference>
<dbReference type="GO" id="GO:0006508">
    <property type="term" value="P:proteolysis"/>
    <property type="evidence" value="ECO:0007669"/>
    <property type="project" value="UniProtKB-KW"/>
</dbReference>
<dbReference type="CDD" id="cd07335">
    <property type="entry name" value="M48B_HtpX_like"/>
    <property type="match status" value="1"/>
</dbReference>
<dbReference type="FunFam" id="3.30.2010.10:FF:000001">
    <property type="entry name" value="Protease HtpX"/>
    <property type="match status" value="1"/>
</dbReference>
<dbReference type="Gene3D" id="3.30.2010.10">
    <property type="entry name" value="Metalloproteases ('zincins'), catalytic domain"/>
    <property type="match status" value="1"/>
</dbReference>
<dbReference type="HAMAP" id="MF_00188">
    <property type="entry name" value="Pept_M48_protease_HtpX"/>
    <property type="match status" value="1"/>
</dbReference>
<dbReference type="InterPro" id="IPR050083">
    <property type="entry name" value="HtpX_protease"/>
</dbReference>
<dbReference type="InterPro" id="IPR022919">
    <property type="entry name" value="Pept_M48_protease_HtpX"/>
</dbReference>
<dbReference type="InterPro" id="IPR001915">
    <property type="entry name" value="Peptidase_M48"/>
</dbReference>
<dbReference type="NCBIfam" id="NF003965">
    <property type="entry name" value="PRK05457.1"/>
    <property type="match status" value="1"/>
</dbReference>
<dbReference type="PANTHER" id="PTHR43221">
    <property type="entry name" value="PROTEASE HTPX"/>
    <property type="match status" value="1"/>
</dbReference>
<dbReference type="PANTHER" id="PTHR43221:SF1">
    <property type="entry name" value="PROTEASE HTPX"/>
    <property type="match status" value="1"/>
</dbReference>
<dbReference type="Pfam" id="PF01435">
    <property type="entry name" value="Peptidase_M48"/>
    <property type="match status" value="1"/>
</dbReference>